<protein>
    <recommendedName>
        <fullName evidence="1">Cysteine--tRNA ligase</fullName>
        <ecNumber evidence="1">6.1.1.16</ecNumber>
    </recommendedName>
    <alternativeName>
        <fullName evidence="1">Cysteinyl-tRNA synthetase</fullName>
        <shortName evidence="1">CysRS</shortName>
    </alternativeName>
</protein>
<comment type="catalytic activity">
    <reaction evidence="1">
        <text>tRNA(Cys) + L-cysteine + ATP = L-cysteinyl-tRNA(Cys) + AMP + diphosphate</text>
        <dbReference type="Rhea" id="RHEA:17773"/>
        <dbReference type="Rhea" id="RHEA-COMP:9661"/>
        <dbReference type="Rhea" id="RHEA-COMP:9679"/>
        <dbReference type="ChEBI" id="CHEBI:30616"/>
        <dbReference type="ChEBI" id="CHEBI:33019"/>
        <dbReference type="ChEBI" id="CHEBI:35235"/>
        <dbReference type="ChEBI" id="CHEBI:78442"/>
        <dbReference type="ChEBI" id="CHEBI:78517"/>
        <dbReference type="ChEBI" id="CHEBI:456215"/>
        <dbReference type="EC" id="6.1.1.16"/>
    </reaction>
</comment>
<comment type="cofactor">
    <cofactor evidence="1">
        <name>Zn(2+)</name>
        <dbReference type="ChEBI" id="CHEBI:29105"/>
    </cofactor>
    <text evidence="1">Binds 1 zinc ion per subunit.</text>
</comment>
<comment type="subunit">
    <text evidence="1">Monomer.</text>
</comment>
<comment type="subcellular location">
    <subcellularLocation>
        <location evidence="1">Cytoplasm</location>
    </subcellularLocation>
</comment>
<comment type="similarity">
    <text evidence="1">Belongs to the class-I aminoacyl-tRNA synthetase family.</text>
</comment>
<feature type="chain" id="PRO_0000332886" description="Cysteine--tRNA ligase">
    <location>
        <begin position="1"/>
        <end position="486"/>
    </location>
</feature>
<feature type="short sequence motif" description="'HIGH' region">
    <location>
        <begin position="32"/>
        <end position="42"/>
    </location>
</feature>
<feature type="short sequence motif" description="'KMSKS' region">
    <location>
        <begin position="279"/>
        <end position="283"/>
    </location>
</feature>
<feature type="binding site" evidence="1">
    <location>
        <position position="30"/>
    </location>
    <ligand>
        <name>Zn(2+)</name>
        <dbReference type="ChEBI" id="CHEBI:29105"/>
    </ligand>
</feature>
<feature type="binding site" evidence="1">
    <location>
        <position position="221"/>
    </location>
    <ligand>
        <name>Zn(2+)</name>
        <dbReference type="ChEBI" id="CHEBI:29105"/>
    </ligand>
</feature>
<feature type="binding site" evidence="1">
    <location>
        <position position="246"/>
    </location>
    <ligand>
        <name>Zn(2+)</name>
        <dbReference type="ChEBI" id="CHEBI:29105"/>
    </ligand>
</feature>
<feature type="binding site" evidence="1">
    <location>
        <position position="250"/>
    </location>
    <ligand>
        <name>Zn(2+)</name>
        <dbReference type="ChEBI" id="CHEBI:29105"/>
    </ligand>
</feature>
<feature type="binding site" evidence="1">
    <location>
        <position position="282"/>
    </location>
    <ligand>
        <name>ATP</name>
        <dbReference type="ChEBI" id="CHEBI:30616"/>
    </ligand>
</feature>
<reference key="1">
    <citation type="submission" date="2007-02" db="EMBL/GenBank/DDBJ databases">
        <title>Complete sequence of chromosome 1 of Rhodobacter sphaeroides ATCC 17029.</title>
        <authorList>
            <person name="Copeland A."/>
            <person name="Lucas S."/>
            <person name="Lapidus A."/>
            <person name="Barry K."/>
            <person name="Detter J.C."/>
            <person name="Glavina del Rio T."/>
            <person name="Hammon N."/>
            <person name="Israni S."/>
            <person name="Dalin E."/>
            <person name="Tice H."/>
            <person name="Pitluck S."/>
            <person name="Kiss H."/>
            <person name="Brettin T."/>
            <person name="Bruce D."/>
            <person name="Han C."/>
            <person name="Tapia R."/>
            <person name="Gilna P."/>
            <person name="Schmutz J."/>
            <person name="Larimer F."/>
            <person name="Land M."/>
            <person name="Hauser L."/>
            <person name="Kyrpides N."/>
            <person name="Mikhailova N."/>
            <person name="Richardson P."/>
            <person name="Mackenzie C."/>
            <person name="Choudhary M."/>
            <person name="Donohue T.J."/>
            <person name="Kaplan S."/>
        </authorList>
    </citation>
    <scope>NUCLEOTIDE SEQUENCE [LARGE SCALE GENOMIC DNA]</scope>
    <source>
        <strain>ATCC 17029 / ATH 2.4.9</strain>
    </source>
</reference>
<organism>
    <name type="scientific">Cereibacter sphaeroides (strain ATCC 17029 / ATH 2.4.9)</name>
    <name type="common">Rhodobacter sphaeroides</name>
    <dbReference type="NCBI Taxonomy" id="349101"/>
    <lineage>
        <taxon>Bacteria</taxon>
        <taxon>Pseudomonadati</taxon>
        <taxon>Pseudomonadota</taxon>
        <taxon>Alphaproteobacteria</taxon>
        <taxon>Rhodobacterales</taxon>
        <taxon>Paracoccaceae</taxon>
        <taxon>Cereibacter</taxon>
    </lineage>
</organism>
<name>SYC_CERS1</name>
<gene>
    <name evidence="1" type="primary">cysS</name>
    <name type="ordered locus">Rsph17029_1380</name>
</gene>
<evidence type="ECO:0000255" key="1">
    <source>
        <dbReference type="HAMAP-Rule" id="MF_00041"/>
    </source>
</evidence>
<dbReference type="EC" id="6.1.1.16" evidence="1"/>
<dbReference type="EMBL" id="CP000577">
    <property type="protein sequence ID" value="ABN76490.1"/>
    <property type="molecule type" value="Genomic_DNA"/>
</dbReference>
<dbReference type="RefSeq" id="WP_011840980.1">
    <property type="nucleotide sequence ID" value="NC_009049.1"/>
</dbReference>
<dbReference type="SMR" id="A3PJH4"/>
<dbReference type="KEGG" id="rsh:Rsph17029_1380"/>
<dbReference type="HOGENOM" id="CLU_013528_0_1_5"/>
<dbReference type="GO" id="GO:0005829">
    <property type="term" value="C:cytosol"/>
    <property type="evidence" value="ECO:0007669"/>
    <property type="project" value="TreeGrafter"/>
</dbReference>
<dbReference type="GO" id="GO:0005524">
    <property type="term" value="F:ATP binding"/>
    <property type="evidence" value="ECO:0007669"/>
    <property type="project" value="UniProtKB-UniRule"/>
</dbReference>
<dbReference type="GO" id="GO:0004817">
    <property type="term" value="F:cysteine-tRNA ligase activity"/>
    <property type="evidence" value="ECO:0007669"/>
    <property type="project" value="UniProtKB-UniRule"/>
</dbReference>
<dbReference type="GO" id="GO:0008270">
    <property type="term" value="F:zinc ion binding"/>
    <property type="evidence" value="ECO:0007669"/>
    <property type="project" value="UniProtKB-UniRule"/>
</dbReference>
<dbReference type="GO" id="GO:0006423">
    <property type="term" value="P:cysteinyl-tRNA aminoacylation"/>
    <property type="evidence" value="ECO:0007669"/>
    <property type="project" value="UniProtKB-UniRule"/>
</dbReference>
<dbReference type="CDD" id="cd00672">
    <property type="entry name" value="CysRS_core"/>
    <property type="match status" value="1"/>
</dbReference>
<dbReference type="Gene3D" id="1.20.120.1910">
    <property type="entry name" value="Cysteine-tRNA ligase, C-terminal anti-codon recognition domain"/>
    <property type="match status" value="1"/>
</dbReference>
<dbReference type="Gene3D" id="3.40.50.620">
    <property type="entry name" value="HUPs"/>
    <property type="match status" value="1"/>
</dbReference>
<dbReference type="HAMAP" id="MF_00041">
    <property type="entry name" value="Cys_tRNA_synth"/>
    <property type="match status" value="1"/>
</dbReference>
<dbReference type="InterPro" id="IPR015803">
    <property type="entry name" value="Cys-tRNA-ligase"/>
</dbReference>
<dbReference type="InterPro" id="IPR015273">
    <property type="entry name" value="Cys-tRNA-synt_Ia_DALR"/>
</dbReference>
<dbReference type="InterPro" id="IPR024909">
    <property type="entry name" value="Cys-tRNA/MSH_ligase"/>
</dbReference>
<dbReference type="InterPro" id="IPR014729">
    <property type="entry name" value="Rossmann-like_a/b/a_fold"/>
</dbReference>
<dbReference type="InterPro" id="IPR032678">
    <property type="entry name" value="tRNA-synt_1_cat_dom"/>
</dbReference>
<dbReference type="InterPro" id="IPR009080">
    <property type="entry name" value="tRNAsynth_Ia_anticodon-bd"/>
</dbReference>
<dbReference type="NCBIfam" id="TIGR00435">
    <property type="entry name" value="cysS"/>
    <property type="match status" value="1"/>
</dbReference>
<dbReference type="PANTHER" id="PTHR10890:SF3">
    <property type="entry name" value="CYSTEINE--TRNA LIGASE, CYTOPLASMIC"/>
    <property type="match status" value="1"/>
</dbReference>
<dbReference type="PANTHER" id="PTHR10890">
    <property type="entry name" value="CYSTEINYL-TRNA SYNTHETASE"/>
    <property type="match status" value="1"/>
</dbReference>
<dbReference type="Pfam" id="PF01406">
    <property type="entry name" value="tRNA-synt_1e"/>
    <property type="match status" value="1"/>
</dbReference>
<dbReference type="PRINTS" id="PR00983">
    <property type="entry name" value="TRNASYNTHCYS"/>
</dbReference>
<dbReference type="SMART" id="SM00840">
    <property type="entry name" value="DALR_2"/>
    <property type="match status" value="1"/>
</dbReference>
<dbReference type="SUPFAM" id="SSF47323">
    <property type="entry name" value="Anticodon-binding domain of a subclass of class I aminoacyl-tRNA synthetases"/>
    <property type="match status" value="1"/>
</dbReference>
<dbReference type="SUPFAM" id="SSF52374">
    <property type="entry name" value="Nucleotidylyl transferase"/>
    <property type="match status" value="1"/>
</dbReference>
<sequence length="486" mass="54070">MTEIRLTNTKTRRKEAFEPIDRKNVRLYVCGPTVYDRAHLGNGRPVVVFDVLFRLLRHVYGESHVTYVRNFTDVDDKINAAALARKDAGDPRSLEALIRERTDETIRWYHEDMDALGALRPTHEPRATEWIGAMIAMIEDLIAKGHAYEREGHVLFRVRSYRDYGALSGRSVDDMIAGARVEVAPFKEDPMDFVLWKPSDDELPGWDSPWGRGRPGWHIECSAMSYELLGATFDIHAGGIDLQFPHHENEIAQSCCAHPEGGFAKVWMHNEMLLVDGRKMSKSLGNFFTIHDLRKDRGIPGEVIRMVLLGTHYSKPMDWTAEKAAQAKATLWKWRKLTADVEPAGSPDAAVLAALADDLNTPAAITRLHSIAAQEDGALLKASASLLGLLEDDLRGWTLPPAIATASNVIEVSGSATAIVGTVPYRKTIERLLDERKQARLGKDFKRSDAIRDLLVGAGVIIKDTPAGAEWDLGPDFDPARLGEPE</sequence>
<keyword id="KW-0030">Aminoacyl-tRNA synthetase</keyword>
<keyword id="KW-0067">ATP-binding</keyword>
<keyword id="KW-0963">Cytoplasm</keyword>
<keyword id="KW-0436">Ligase</keyword>
<keyword id="KW-0479">Metal-binding</keyword>
<keyword id="KW-0547">Nucleotide-binding</keyword>
<keyword id="KW-0648">Protein biosynthesis</keyword>
<keyword id="KW-0862">Zinc</keyword>
<accession>A3PJH4</accession>
<proteinExistence type="inferred from homology"/>